<proteinExistence type="inferred from homology"/>
<geneLocation type="chloroplast"/>
<organism>
    <name type="scientific">Cryptomeria japonica</name>
    <name type="common">Japanese cedar</name>
    <name type="synonym">Cupressus japonica</name>
    <dbReference type="NCBI Taxonomy" id="3369"/>
    <lineage>
        <taxon>Eukaryota</taxon>
        <taxon>Viridiplantae</taxon>
        <taxon>Streptophyta</taxon>
        <taxon>Embryophyta</taxon>
        <taxon>Tracheophyta</taxon>
        <taxon>Spermatophyta</taxon>
        <taxon>Pinopsida</taxon>
        <taxon>Pinidae</taxon>
        <taxon>Conifers II</taxon>
        <taxon>Cupressales</taxon>
        <taxon>Cupressaceae</taxon>
        <taxon>Cryptomeria</taxon>
    </lineage>
</organism>
<accession>B1VKH7</accession>
<sequence length="248" mass="27459">MDILQFPINMLNYFYEISGVEVGQHFYWQIGGFQVHAQVLITSWIVIAVLLGSATLAVRDPQIIPNGAQNFLEYVLEFVRDLARTQIGEEEYGPWVPFIGTMFLFIFVSNWAGALFPWGIIKLPHGELAAPTNDINTTVALALLTSVAYFYAGFTKRGLGYFGKYIQPTPILLPINILEDFTKPLSLSFRLFGNILADELVVAVLVSLVPIVVPIPVMFLGLFTSGIQALIFATLAAAYIGESMEGHH</sequence>
<keyword id="KW-0066">ATP synthesis</keyword>
<keyword id="KW-0138">CF(0)</keyword>
<keyword id="KW-0150">Chloroplast</keyword>
<keyword id="KW-0375">Hydrogen ion transport</keyword>
<keyword id="KW-0406">Ion transport</keyword>
<keyword id="KW-0472">Membrane</keyword>
<keyword id="KW-0934">Plastid</keyword>
<keyword id="KW-0793">Thylakoid</keyword>
<keyword id="KW-0812">Transmembrane</keyword>
<keyword id="KW-1133">Transmembrane helix</keyword>
<keyword id="KW-0813">Transport</keyword>
<name>ATPI_CRYJA</name>
<evidence type="ECO:0000255" key="1">
    <source>
        <dbReference type="HAMAP-Rule" id="MF_01393"/>
    </source>
</evidence>
<reference key="1">
    <citation type="journal article" date="2008" name="BMC Plant Biol.">
        <title>Complete nucleotide sequence of the Cryptomeria japonica D. Don. chloroplast genome and comparative chloroplast genomics: diversified genomic structure of coniferous species.</title>
        <authorList>
            <person name="Hirao T."/>
            <person name="Watanabe A."/>
            <person name="Kurita M."/>
            <person name="Kondo T."/>
            <person name="Takata K."/>
        </authorList>
    </citation>
    <scope>NUCLEOTIDE SEQUENCE [LARGE SCALE GENOMIC DNA]</scope>
</reference>
<feature type="chain" id="PRO_0000362546" description="ATP synthase subunit a, chloroplastic">
    <location>
        <begin position="1"/>
        <end position="248"/>
    </location>
</feature>
<feature type="transmembrane region" description="Helical" evidence="1">
    <location>
        <begin position="38"/>
        <end position="58"/>
    </location>
</feature>
<feature type="transmembrane region" description="Helical" evidence="1">
    <location>
        <begin position="96"/>
        <end position="116"/>
    </location>
</feature>
<feature type="transmembrane region" description="Helical" evidence="1">
    <location>
        <begin position="135"/>
        <end position="155"/>
    </location>
</feature>
<feature type="transmembrane region" description="Helical" evidence="1">
    <location>
        <begin position="200"/>
        <end position="220"/>
    </location>
</feature>
<feature type="transmembrane region" description="Helical" evidence="1">
    <location>
        <begin position="221"/>
        <end position="241"/>
    </location>
</feature>
<dbReference type="EMBL" id="AP009377">
    <property type="protein sequence ID" value="BAG16688.1"/>
    <property type="molecule type" value="Genomic_DNA"/>
</dbReference>
<dbReference type="RefSeq" id="YP_001806690.1">
    <property type="nucleotide sequence ID" value="NC_010548.1"/>
</dbReference>
<dbReference type="SMR" id="B1VKH7"/>
<dbReference type="GeneID" id="6166562"/>
<dbReference type="KEGG" id="cjf:6166562"/>
<dbReference type="OrthoDB" id="2303at2759"/>
<dbReference type="GO" id="GO:0009535">
    <property type="term" value="C:chloroplast thylakoid membrane"/>
    <property type="evidence" value="ECO:0007669"/>
    <property type="project" value="UniProtKB-SubCell"/>
</dbReference>
<dbReference type="GO" id="GO:0005886">
    <property type="term" value="C:plasma membrane"/>
    <property type="evidence" value="ECO:0007669"/>
    <property type="project" value="UniProtKB-UniRule"/>
</dbReference>
<dbReference type="GO" id="GO:0045259">
    <property type="term" value="C:proton-transporting ATP synthase complex"/>
    <property type="evidence" value="ECO:0007669"/>
    <property type="project" value="UniProtKB-KW"/>
</dbReference>
<dbReference type="GO" id="GO:0046933">
    <property type="term" value="F:proton-transporting ATP synthase activity, rotational mechanism"/>
    <property type="evidence" value="ECO:0007669"/>
    <property type="project" value="UniProtKB-UniRule"/>
</dbReference>
<dbReference type="CDD" id="cd00310">
    <property type="entry name" value="ATP-synt_Fo_a_6"/>
    <property type="match status" value="1"/>
</dbReference>
<dbReference type="FunFam" id="1.20.120.220:FF:000001">
    <property type="entry name" value="ATP synthase subunit a, chloroplastic"/>
    <property type="match status" value="1"/>
</dbReference>
<dbReference type="Gene3D" id="1.20.120.220">
    <property type="entry name" value="ATP synthase, F0 complex, subunit A"/>
    <property type="match status" value="1"/>
</dbReference>
<dbReference type="HAMAP" id="MF_01393">
    <property type="entry name" value="ATP_synth_a_bact"/>
    <property type="match status" value="1"/>
</dbReference>
<dbReference type="InterPro" id="IPR045082">
    <property type="entry name" value="ATP_syn_F0_a_bact/chloroplast"/>
</dbReference>
<dbReference type="InterPro" id="IPR000568">
    <property type="entry name" value="ATP_synth_F0_asu"/>
</dbReference>
<dbReference type="InterPro" id="IPR023011">
    <property type="entry name" value="ATP_synth_F0_asu_AS"/>
</dbReference>
<dbReference type="InterPro" id="IPR035908">
    <property type="entry name" value="F0_ATP_A_sf"/>
</dbReference>
<dbReference type="NCBIfam" id="TIGR01131">
    <property type="entry name" value="ATP_synt_6_or_A"/>
    <property type="match status" value="1"/>
</dbReference>
<dbReference type="PANTHER" id="PTHR42823">
    <property type="entry name" value="ATP SYNTHASE SUBUNIT A, CHLOROPLASTIC"/>
    <property type="match status" value="1"/>
</dbReference>
<dbReference type="PANTHER" id="PTHR42823:SF3">
    <property type="entry name" value="ATP SYNTHASE SUBUNIT A, CHLOROPLASTIC"/>
    <property type="match status" value="1"/>
</dbReference>
<dbReference type="Pfam" id="PF00119">
    <property type="entry name" value="ATP-synt_A"/>
    <property type="match status" value="1"/>
</dbReference>
<dbReference type="PRINTS" id="PR00123">
    <property type="entry name" value="ATPASEA"/>
</dbReference>
<dbReference type="SUPFAM" id="SSF81336">
    <property type="entry name" value="F1F0 ATP synthase subunit A"/>
    <property type="match status" value="1"/>
</dbReference>
<dbReference type="PROSITE" id="PS00449">
    <property type="entry name" value="ATPASE_A"/>
    <property type="match status" value="1"/>
</dbReference>
<protein>
    <recommendedName>
        <fullName evidence="1">ATP synthase subunit a, chloroplastic</fullName>
    </recommendedName>
    <alternativeName>
        <fullName evidence="1">ATP synthase F0 sector subunit a</fullName>
    </alternativeName>
    <alternativeName>
        <fullName evidence="1">F-ATPase subunit IV</fullName>
    </alternativeName>
</protein>
<gene>
    <name evidence="1" type="primary">atpI</name>
</gene>
<comment type="function">
    <text evidence="1">Key component of the proton channel; it plays a direct role in the translocation of protons across the membrane.</text>
</comment>
<comment type="subunit">
    <text evidence="1">F-type ATPases have 2 components, CF(1) - the catalytic core - and CF(0) - the membrane proton channel. CF(1) has five subunits: alpha(3), beta(3), gamma(1), delta(1), epsilon(1). CF(0) has four main subunits: a, b, b' and c.</text>
</comment>
<comment type="subcellular location">
    <subcellularLocation>
        <location evidence="1">Plastid</location>
        <location evidence="1">Chloroplast thylakoid membrane</location>
        <topology evidence="1">Multi-pass membrane protein</topology>
    </subcellularLocation>
</comment>
<comment type="similarity">
    <text evidence="1">Belongs to the ATPase A chain family.</text>
</comment>